<dbReference type="EC" id="2.4.2.10" evidence="1"/>
<dbReference type="EMBL" id="CU234118">
    <property type="protein sequence ID" value="CAL74673.1"/>
    <property type="molecule type" value="Genomic_DNA"/>
</dbReference>
<dbReference type="RefSeq" id="WP_011923930.1">
    <property type="nucleotide sequence ID" value="NC_009445.1"/>
</dbReference>
<dbReference type="SMR" id="A4YL97"/>
<dbReference type="STRING" id="114615.BRADO0748"/>
<dbReference type="KEGG" id="bra:BRADO0748"/>
<dbReference type="eggNOG" id="COG0461">
    <property type="taxonomic scope" value="Bacteria"/>
</dbReference>
<dbReference type="HOGENOM" id="CLU_074878_2_1_5"/>
<dbReference type="OrthoDB" id="9779060at2"/>
<dbReference type="UniPathway" id="UPA00070">
    <property type="reaction ID" value="UER00119"/>
</dbReference>
<dbReference type="Proteomes" id="UP000001994">
    <property type="component" value="Chromosome"/>
</dbReference>
<dbReference type="GO" id="GO:0000287">
    <property type="term" value="F:magnesium ion binding"/>
    <property type="evidence" value="ECO:0007669"/>
    <property type="project" value="UniProtKB-UniRule"/>
</dbReference>
<dbReference type="GO" id="GO:0004588">
    <property type="term" value="F:orotate phosphoribosyltransferase activity"/>
    <property type="evidence" value="ECO:0007669"/>
    <property type="project" value="UniProtKB-UniRule"/>
</dbReference>
<dbReference type="GO" id="GO:0044205">
    <property type="term" value="P:'de novo' UMP biosynthetic process"/>
    <property type="evidence" value="ECO:0007669"/>
    <property type="project" value="UniProtKB-UniRule"/>
</dbReference>
<dbReference type="GO" id="GO:0019856">
    <property type="term" value="P:pyrimidine nucleobase biosynthetic process"/>
    <property type="evidence" value="ECO:0007669"/>
    <property type="project" value="TreeGrafter"/>
</dbReference>
<dbReference type="CDD" id="cd06223">
    <property type="entry name" value="PRTases_typeI"/>
    <property type="match status" value="1"/>
</dbReference>
<dbReference type="FunFam" id="3.40.50.2020:FF:000029">
    <property type="entry name" value="Orotate phosphoribosyltransferase"/>
    <property type="match status" value="1"/>
</dbReference>
<dbReference type="Gene3D" id="3.40.50.2020">
    <property type="match status" value="1"/>
</dbReference>
<dbReference type="HAMAP" id="MF_01208">
    <property type="entry name" value="PyrE"/>
    <property type="match status" value="1"/>
</dbReference>
<dbReference type="InterPro" id="IPR023031">
    <property type="entry name" value="OPRT"/>
</dbReference>
<dbReference type="InterPro" id="IPR004467">
    <property type="entry name" value="Or_phspho_trans_dom"/>
</dbReference>
<dbReference type="InterPro" id="IPR000836">
    <property type="entry name" value="PRibTrfase_dom"/>
</dbReference>
<dbReference type="InterPro" id="IPR029057">
    <property type="entry name" value="PRTase-like"/>
</dbReference>
<dbReference type="NCBIfam" id="TIGR00336">
    <property type="entry name" value="pyrE"/>
    <property type="match status" value="1"/>
</dbReference>
<dbReference type="PANTHER" id="PTHR19278">
    <property type="entry name" value="OROTATE PHOSPHORIBOSYLTRANSFERASE"/>
    <property type="match status" value="1"/>
</dbReference>
<dbReference type="PANTHER" id="PTHR19278:SF9">
    <property type="entry name" value="URIDINE 5'-MONOPHOSPHATE SYNTHASE"/>
    <property type="match status" value="1"/>
</dbReference>
<dbReference type="Pfam" id="PF00156">
    <property type="entry name" value="Pribosyltran"/>
    <property type="match status" value="1"/>
</dbReference>
<dbReference type="SUPFAM" id="SSF53271">
    <property type="entry name" value="PRTase-like"/>
    <property type="match status" value="1"/>
</dbReference>
<feature type="chain" id="PRO_1000066212" description="Orotate phosphoribosyltransferase">
    <location>
        <begin position="1"/>
        <end position="185"/>
    </location>
</feature>
<feature type="binding site" evidence="1">
    <location>
        <position position="98"/>
    </location>
    <ligand>
        <name>5-phospho-alpha-D-ribose 1-diphosphate</name>
        <dbReference type="ChEBI" id="CHEBI:58017"/>
        <note>ligand shared between dimeric partners</note>
    </ligand>
</feature>
<feature type="binding site" description="in other chain" evidence="1">
    <location>
        <position position="99"/>
    </location>
    <ligand>
        <name>5-phospho-alpha-D-ribose 1-diphosphate</name>
        <dbReference type="ChEBI" id="CHEBI:58017"/>
        <note>ligand shared between dimeric partners</note>
    </ligand>
</feature>
<feature type="binding site" evidence="1">
    <location>
        <position position="102"/>
    </location>
    <ligand>
        <name>5-phospho-alpha-D-ribose 1-diphosphate</name>
        <dbReference type="ChEBI" id="CHEBI:58017"/>
        <note>ligand shared between dimeric partners</note>
    </ligand>
</feature>
<feature type="binding site" evidence="1">
    <location>
        <position position="104"/>
    </location>
    <ligand>
        <name>5-phospho-alpha-D-ribose 1-diphosphate</name>
        <dbReference type="ChEBI" id="CHEBI:58017"/>
        <note>ligand shared between dimeric partners</note>
    </ligand>
</feature>
<feature type="binding site" description="in other chain" evidence="1">
    <location>
        <begin position="128"/>
        <end position="136"/>
    </location>
    <ligand>
        <name>5-phospho-alpha-D-ribose 1-diphosphate</name>
        <dbReference type="ChEBI" id="CHEBI:58017"/>
        <note>ligand shared between dimeric partners</note>
    </ligand>
</feature>
<feature type="binding site" evidence="1">
    <location>
        <position position="132"/>
    </location>
    <ligand>
        <name>orotate</name>
        <dbReference type="ChEBI" id="CHEBI:30839"/>
    </ligand>
</feature>
<feature type="binding site" evidence="1">
    <location>
        <position position="160"/>
    </location>
    <ligand>
        <name>orotate</name>
        <dbReference type="ChEBI" id="CHEBI:30839"/>
    </ligand>
</feature>
<organism>
    <name type="scientific">Bradyrhizobium sp. (strain ORS 278)</name>
    <dbReference type="NCBI Taxonomy" id="114615"/>
    <lineage>
        <taxon>Bacteria</taxon>
        <taxon>Pseudomonadati</taxon>
        <taxon>Pseudomonadota</taxon>
        <taxon>Alphaproteobacteria</taxon>
        <taxon>Hyphomicrobiales</taxon>
        <taxon>Nitrobacteraceae</taxon>
        <taxon>Bradyrhizobium</taxon>
    </lineage>
</organism>
<comment type="function">
    <text evidence="1">Catalyzes the transfer of a ribosyl phosphate group from 5-phosphoribose 1-diphosphate to orotate, leading to the formation of orotidine monophosphate (OMP).</text>
</comment>
<comment type="catalytic activity">
    <reaction evidence="1">
        <text>orotidine 5'-phosphate + diphosphate = orotate + 5-phospho-alpha-D-ribose 1-diphosphate</text>
        <dbReference type="Rhea" id="RHEA:10380"/>
        <dbReference type="ChEBI" id="CHEBI:30839"/>
        <dbReference type="ChEBI" id="CHEBI:33019"/>
        <dbReference type="ChEBI" id="CHEBI:57538"/>
        <dbReference type="ChEBI" id="CHEBI:58017"/>
        <dbReference type="EC" id="2.4.2.10"/>
    </reaction>
</comment>
<comment type="cofactor">
    <cofactor evidence="1">
        <name>Mg(2+)</name>
        <dbReference type="ChEBI" id="CHEBI:18420"/>
    </cofactor>
</comment>
<comment type="pathway">
    <text evidence="1">Pyrimidine metabolism; UMP biosynthesis via de novo pathway; UMP from orotate: step 1/2.</text>
</comment>
<comment type="subunit">
    <text evidence="1">Homodimer.</text>
</comment>
<comment type="similarity">
    <text evidence="1">Belongs to the purine/pyrimidine phosphoribosyltransferase family. PyrE subfamily.</text>
</comment>
<name>PYRE_BRASO</name>
<protein>
    <recommendedName>
        <fullName evidence="1">Orotate phosphoribosyltransferase</fullName>
        <shortName evidence="1">OPRT</shortName>
        <shortName evidence="1">OPRTase</shortName>
        <ecNumber evidence="1">2.4.2.10</ecNumber>
    </recommendedName>
</protein>
<sequence length="185" mass="20077">MSKSASRARLLEIIRRRSFGRGEVTLASGRKSDFYFNLKPTMMDPEGATLLAELTYEALKDDGYDYIGGLEMGAVPLAGAIAQISWIKGHPIAAFFVRKKPKEHGARLAIEGLTRDETLAGKRIVVVEDVTTTGGSAMKAVETLREAGAEVSLVFTMVDREEGAAEAFAAAGLSFRALYKAREFL</sequence>
<reference key="1">
    <citation type="journal article" date="2007" name="Science">
        <title>Legumes symbioses: absence of nod genes in photosynthetic bradyrhizobia.</title>
        <authorList>
            <person name="Giraud E."/>
            <person name="Moulin L."/>
            <person name="Vallenet D."/>
            <person name="Barbe V."/>
            <person name="Cytryn E."/>
            <person name="Avarre J.-C."/>
            <person name="Jaubert M."/>
            <person name="Simon D."/>
            <person name="Cartieaux F."/>
            <person name="Prin Y."/>
            <person name="Bena G."/>
            <person name="Hannibal L."/>
            <person name="Fardoux J."/>
            <person name="Kojadinovic M."/>
            <person name="Vuillet L."/>
            <person name="Lajus A."/>
            <person name="Cruveiller S."/>
            <person name="Rouy Z."/>
            <person name="Mangenot S."/>
            <person name="Segurens B."/>
            <person name="Dossat C."/>
            <person name="Franck W.L."/>
            <person name="Chang W.-S."/>
            <person name="Saunders E."/>
            <person name="Bruce D."/>
            <person name="Richardson P."/>
            <person name="Normand P."/>
            <person name="Dreyfus B."/>
            <person name="Pignol D."/>
            <person name="Stacey G."/>
            <person name="Emerich D."/>
            <person name="Vermeglio A."/>
            <person name="Medigue C."/>
            <person name="Sadowsky M."/>
        </authorList>
    </citation>
    <scope>NUCLEOTIDE SEQUENCE [LARGE SCALE GENOMIC DNA]</scope>
    <source>
        <strain>ORS 278</strain>
    </source>
</reference>
<proteinExistence type="inferred from homology"/>
<evidence type="ECO:0000255" key="1">
    <source>
        <dbReference type="HAMAP-Rule" id="MF_01208"/>
    </source>
</evidence>
<gene>
    <name evidence="1" type="primary">pyrE</name>
    <name type="ordered locus">BRADO0748</name>
</gene>
<keyword id="KW-0328">Glycosyltransferase</keyword>
<keyword id="KW-0460">Magnesium</keyword>
<keyword id="KW-0665">Pyrimidine biosynthesis</keyword>
<keyword id="KW-1185">Reference proteome</keyword>
<keyword id="KW-0808">Transferase</keyword>
<accession>A4YL97</accession>